<name>HIS2_PSEAE</name>
<sequence>MSDTLTRLAAVLEERKNAAPDSSYVASLYHKGLNKILEKVGEESVETIIAAKDAAASGDCQDLIYETADLWFHSLVMLSALGQHPQAVLDELERRFGLSGHAEKAARQPSA</sequence>
<evidence type="ECO:0000250" key="1"/>
<evidence type="ECO:0000305" key="2"/>
<gene>
    <name type="primary">hisE</name>
    <name type="ordered locus">PA5067</name>
</gene>
<comment type="catalytic activity">
    <reaction>
        <text>1-(5-phospho-beta-D-ribosyl)-ATP + H2O = 1-(5-phospho-beta-D-ribosyl)-5'-AMP + diphosphate + H(+)</text>
        <dbReference type="Rhea" id="RHEA:22828"/>
        <dbReference type="ChEBI" id="CHEBI:15377"/>
        <dbReference type="ChEBI" id="CHEBI:15378"/>
        <dbReference type="ChEBI" id="CHEBI:33019"/>
        <dbReference type="ChEBI" id="CHEBI:59457"/>
        <dbReference type="ChEBI" id="CHEBI:73183"/>
        <dbReference type="EC" id="3.6.1.31"/>
    </reaction>
</comment>
<comment type="pathway">
    <text>Amino-acid biosynthesis; L-histidine biosynthesis; L-histidine from 5-phospho-alpha-D-ribose 1-diphosphate: step 2/9.</text>
</comment>
<comment type="subcellular location">
    <subcellularLocation>
        <location evidence="1">Cytoplasm</location>
    </subcellularLocation>
</comment>
<comment type="similarity">
    <text evidence="2">Belongs to the PRA-PH family.</text>
</comment>
<proteinExistence type="inferred from homology"/>
<organism>
    <name type="scientific">Pseudomonas aeruginosa (strain ATCC 15692 / DSM 22644 / CIP 104116 / JCM 14847 / LMG 12228 / 1C / PRS 101 / PAO1)</name>
    <dbReference type="NCBI Taxonomy" id="208964"/>
    <lineage>
        <taxon>Bacteria</taxon>
        <taxon>Pseudomonadati</taxon>
        <taxon>Pseudomonadota</taxon>
        <taxon>Gammaproteobacteria</taxon>
        <taxon>Pseudomonadales</taxon>
        <taxon>Pseudomonadaceae</taxon>
        <taxon>Pseudomonas</taxon>
    </lineage>
</organism>
<dbReference type="EC" id="3.6.1.31"/>
<dbReference type="EMBL" id="AE004091">
    <property type="protein sequence ID" value="AAG08452.1"/>
    <property type="molecule type" value="Genomic_DNA"/>
</dbReference>
<dbReference type="PIR" id="F83011">
    <property type="entry name" value="F83011"/>
</dbReference>
<dbReference type="RefSeq" id="NP_253754.1">
    <property type="nucleotide sequence ID" value="NC_002516.2"/>
</dbReference>
<dbReference type="RefSeq" id="WP_003103458.1">
    <property type="nucleotide sequence ID" value="NZ_QZGE01000002.1"/>
</dbReference>
<dbReference type="SMR" id="Q9HUB6"/>
<dbReference type="STRING" id="208964.PA5067"/>
<dbReference type="PaxDb" id="208964-PA5067"/>
<dbReference type="DNASU" id="878486"/>
<dbReference type="GeneID" id="878486"/>
<dbReference type="KEGG" id="pae:PA5067"/>
<dbReference type="PATRIC" id="fig|208964.12.peg.5311"/>
<dbReference type="PseudoCAP" id="PA5067"/>
<dbReference type="HOGENOM" id="CLU_123337_1_2_6"/>
<dbReference type="InParanoid" id="Q9HUB6"/>
<dbReference type="OrthoDB" id="9814738at2"/>
<dbReference type="PhylomeDB" id="Q9HUB6"/>
<dbReference type="BioCyc" id="PAER208964:G1FZ6-5183-MONOMER"/>
<dbReference type="UniPathway" id="UPA00031">
    <property type="reaction ID" value="UER00007"/>
</dbReference>
<dbReference type="Proteomes" id="UP000002438">
    <property type="component" value="Chromosome"/>
</dbReference>
<dbReference type="GO" id="GO:0005737">
    <property type="term" value="C:cytoplasm"/>
    <property type="evidence" value="ECO:0007669"/>
    <property type="project" value="UniProtKB-SubCell"/>
</dbReference>
<dbReference type="GO" id="GO:0005524">
    <property type="term" value="F:ATP binding"/>
    <property type="evidence" value="ECO:0007669"/>
    <property type="project" value="UniProtKB-KW"/>
</dbReference>
<dbReference type="GO" id="GO:0004636">
    <property type="term" value="F:phosphoribosyl-ATP diphosphatase activity"/>
    <property type="evidence" value="ECO:0007669"/>
    <property type="project" value="UniProtKB-UniRule"/>
</dbReference>
<dbReference type="GO" id="GO:0000105">
    <property type="term" value="P:L-histidine biosynthetic process"/>
    <property type="evidence" value="ECO:0007669"/>
    <property type="project" value="UniProtKB-UniRule"/>
</dbReference>
<dbReference type="CDD" id="cd11534">
    <property type="entry name" value="NTP-PPase_HisIE_like"/>
    <property type="match status" value="1"/>
</dbReference>
<dbReference type="Gene3D" id="1.10.287.1080">
    <property type="entry name" value="MazG-like"/>
    <property type="match status" value="1"/>
</dbReference>
<dbReference type="HAMAP" id="MF_01020">
    <property type="entry name" value="HisE"/>
    <property type="match status" value="1"/>
</dbReference>
<dbReference type="InterPro" id="IPR008179">
    <property type="entry name" value="HisE"/>
</dbReference>
<dbReference type="InterPro" id="IPR021130">
    <property type="entry name" value="PRib-ATP_PPHydrolase-like"/>
</dbReference>
<dbReference type="NCBIfam" id="TIGR03188">
    <property type="entry name" value="histidine_hisI"/>
    <property type="match status" value="1"/>
</dbReference>
<dbReference type="NCBIfam" id="NF001611">
    <property type="entry name" value="PRK00400.1-3"/>
    <property type="match status" value="1"/>
</dbReference>
<dbReference type="PANTHER" id="PTHR42945">
    <property type="entry name" value="HISTIDINE BIOSYNTHESIS BIFUNCTIONAL PROTEIN"/>
    <property type="match status" value="1"/>
</dbReference>
<dbReference type="PANTHER" id="PTHR42945:SF9">
    <property type="entry name" value="HISTIDINE BIOSYNTHESIS BIFUNCTIONAL PROTEIN HISIE"/>
    <property type="match status" value="1"/>
</dbReference>
<dbReference type="Pfam" id="PF01503">
    <property type="entry name" value="PRA-PH"/>
    <property type="match status" value="1"/>
</dbReference>
<dbReference type="SUPFAM" id="SSF101386">
    <property type="entry name" value="all-alpha NTP pyrophosphatases"/>
    <property type="match status" value="1"/>
</dbReference>
<protein>
    <recommendedName>
        <fullName>Phosphoribosyl-ATP pyrophosphatase</fullName>
        <shortName>PRA-PH</shortName>
        <ecNumber>3.6.1.31</ecNumber>
    </recommendedName>
</protein>
<reference key="1">
    <citation type="journal article" date="2000" name="Nature">
        <title>Complete genome sequence of Pseudomonas aeruginosa PAO1, an opportunistic pathogen.</title>
        <authorList>
            <person name="Stover C.K."/>
            <person name="Pham X.-Q.T."/>
            <person name="Erwin A.L."/>
            <person name="Mizoguchi S.D."/>
            <person name="Warrener P."/>
            <person name="Hickey M.J."/>
            <person name="Brinkman F.S.L."/>
            <person name="Hufnagle W.O."/>
            <person name="Kowalik D.J."/>
            <person name="Lagrou M."/>
            <person name="Garber R.L."/>
            <person name="Goltry L."/>
            <person name="Tolentino E."/>
            <person name="Westbrock-Wadman S."/>
            <person name="Yuan Y."/>
            <person name="Brody L.L."/>
            <person name="Coulter S.N."/>
            <person name="Folger K.R."/>
            <person name="Kas A."/>
            <person name="Larbig K."/>
            <person name="Lim R.M."/>
            <person name="Smith K.A."/>
            <person name="Spencer D.H."/>
            <person name="Wong G.K.-S."/>
            <person name="Wu Z."/>
            <person name="Paulsen I.T."/>
            <person name="Reizer J."/>
            <person name="Saier M.H. Jr."/>
            <person name="Hancock R.E.W."/>
            <person name="Lory S."/>
            <person name="Olson M.V."/>
        </authorList>
    </citation>
    <scope>NUCLEOTIDE SEQUENCE [LARGE SCALE GENOMIC DNA]</scope>
    <source>
        <strain>ATCC 15692 / DSM 22644 / CIP 104116 / JCM 14847 / LMG 12228 / 1C / PRS 101 / PAO1</strain>
    </source>
</reference>
<keyword id="KW-0028">Amino-acid biosynthesis</keyword>
<keyword id="KW-0067">ATP-binding</keyword>
<keyword id="KW-0963">Cytoplasm</keyword>
<keyword id="KW-0368">Histidine biosynthesis</keyword>
<keyword id="KW-0378">Hydrolase</keyword>
<keyword id="KW-0547">Nucleotide-binding</keyword>
<keyword id="KW-1185">Reference proteome</keyword>
<accession>Q9HUB6</accession>
<feature type="chain" id="PRO_0000136376" description="Phosphoribosyl-ATP pyrophosphatase">
    <location>
        <begin position="1"/>
        <end position="111"/>
    </location>
</feature>